<organism>
    <name type="scientific">Arabidopsis thaliana</name>
    <name type="common">Mouse-ear cress</name>
    <dbReference type="NCBI Taxonomy" id="3702"/>
    <lineage>
        <taxon>Eukaryota</taxon>
        <taxon>Viridiplantae</taxon>
        <taxon>Streptophyta</taxon>
        <taxon>Embryophyta</taxon>
        <taxon>Tracheophyta</taxon>
        <taxon>Spermatophyta</taxon>
        <taxon>Magnoliopsida</taxon>
        <taxon>eudicotyledons</taxon>
        <taxon>Gunneridae</taxon>
        <taxon>Pentapetalae</taxon>
        <taxon>rosids</taxon>
        <taxon>malvids</taxon>
        <taxon>Brassicales</taxon>
        <taxon>Brassicaceae</taxon>
        <taxon>Camelineae</taxon>
        <taxon>Arabidopsis</taxon>
    </lineage>
</organism>
<feature type="signal peptide" evidence="2">
    <location>
        <begin position="1"/>
        <end position="22"/>
    </location>
</feature>
<feature type="chain" id="PRO_0000430475" description="Cytochrome b561 and DOMON domain-containing protein At2g04850">
    <location>
        <begin position="23"/>
        <end position="404"/>
    </location>
</feature>
<feature type="transmembrane region" description="Helical; Name=1" evidence="2">
    <location>
        <begin position="217"/>
        <end position="237"/>
    </location>
</feature>
<feature type="transmembrane region" description="Helical; Name=2" evidence="2">
    <location>
        <begin position="256"/>
        <end position="276"/>
    </location>
</feature>
<feature type="transmembrane region" description="Helical; Name=3" evidence="2">
    <location>
        <begin position="290"/>
        <end position="310"/>
    </location>
</feature>
<feature type="transmembrane region" description="Helical; Name=4" evidence="2">
    <location>
        <begin position="326"/>
        <end position="346"/>
    </location>
</feature>
<feature type="transmembrane region" description="Helical; Name=5" evidence="2">
    <location>
        <begin position="359"/>
        <end position="379"/>
    </location>
</feature>
<feature type="domain" description="DOMON" evidence="4">
    <location>
        <begin position="43"/>
        <end position="173"/>
    </location>
</feature>
<feature type="domain" description="Cytochrome b561" evidence="3">
    <location>
        <begin position="180"/>
        <end position="380"/>
    </location>
</feature>
<feature type="binding site" description="axial binding residue" evidence="1">
    <location>
        <position position="219"/>
    </location>
    <ligand>
        <name>heme b</name>
        <dbReference type="ChEBI" id="CHEBI:60344"/>
        <label>1</label>
    </ligand>
    <ligandPart>
        <name>Fe</name>
        <dbReference type="ChEBI" id="CHEBI:18248"/>
    </ligandPart>
</feature>
<feature type="binding site" description="axial binding residue" evidence="1">
    <location>
        <position position="255"/>
    </location>
    <ligand>
        <name>heme b</name>
        <dbReference type="ChEBI" id="CHEBI:60344"/>
        <label>2</label>
    </ligand>
    <ligandPart>
        <name>Fe</name>
        <dbReference type="ChEBI" id="CHEBI:18248"/>
    </ligandPart>
</feature>
<feature type="binding site" description="axial binding residue" evidence="1">
    <location>
        <position position="288"/>
    </location>
    <ligand>
        <name>heme b</name>
        <dbReference type="ChEBI" id="CHEBI:60344"/>
        <label>1</label>
    </ligand>
    <ligandPart>
        <name>Fe</name>
        <dbReference type="ChEBI" id="CHEBI:18248"/>
    </ligandPart>
</feature>
<feature type="binding site" description="axial binding residue" evidence="1">
    <location>
        <position position="324"/>
    </location>
    <ligand>
        <name>heme b</name>
        <dbReference type="ChEBI" id="CHEBI:60344"/>
        <label>2</label>
    </ligand>
    <ligandPart>
        <name>Fe</name>
        <dbReference type="ChEBI" id="CHEBI:18248"/>
    </ligandPart>
</feature>
<feature type="sequence conflict" description="In Ref. 4; AAM61181." evidence="7" ref="4">
    <original>A</original>
    <variation>T</variation>
    <location>
        <position position="45"/>
    </location>
</feature>
<sequence>MATLILSFLLLLLATKLPESLAGHCTTTTATKSFEKCISLPTQQASIAWTYHPHNATLDLCFFGTFISPSGWVGWGINPDSPAQMTGSRVLIAFPDPNSGQLILLPYVLDSSVKLQKGPLLSRPLDLVRLSSSSASLYGGKMATIRNGASVQIYASVKLSSNNTKIHHVWNRGLYVQGYSPTIHPTTSTDLSSFSTFDVTSGFATVNQNSGSRALKVTHGVVNAISWGFLLPAGAVTARYLRQMQSIGPTWFYIHAAIQLTGFLLGTIGFSIGIVLGHNSPGVTYGLHRSLGIATFTAAALQTLALLFRPKTTNKFRRYWKSYHHFVGYACVVMGVVNVFQGFEVLREGRSYAKLGYCLCLSTLVGVCVAMEVNSWVVFCRKAKEEKMKRDGLTGVDRCSGSHS</sequence>
<reference key="1">
    <citation type="journal article" date="1999" name="Nature">
        <title>Sequence and analysis of chromosome 2 of the plant Arabidopsis thaliana.</title>
        <authorList>
            <person name="Lin X."/>
            <person name="Kaul S."/>
            <person name="Rounsley S.D."/>
            <person name="Shea T.P."/>
            <person name="Benito M.-I."/>
            <person name="Town C.D."/>
            <person name="Fujii C.Y."/>
            <person name="Mason T.M."/>
            <person name="Bowman C.L."/>
            <person name="Barnstead M.E."/>
            <person name="Feldblyum T.V."/>
            <person name="Buell C.R."/>
            <person name="Ketchum K.A."/>
            <person name="Lee J.J."/>
            <person name="Ronning C.M."/>
            <person name="Koo H.L."/>
            <person name="Moffat K.S."/>
            <person name="Cronin L.A."/>
            <person name="Shen M."/>
            <person name="Pai G."/>
            <person name="Van Aken S."/>
            <person name="Umayam L."/>
            <person name="Tallon L.J."/>
            <person name="Gill J.E."/>
            <person name="Adams M.D."/>
            <person name="Carrera A.J."/>
            <person name="Creasy T.H."/>
            <person name="Goodman H.M."/>
            <person name="Somerville C.R."/>
            <person name="Copenhaver G.P."/>
            <person name="Preuss D."/>
            <person name="Nierman W.C."/>
            <person name="White O."/>
            <person name="Eisen J.A."/>
            <person name="Salzberg S.L."/>
            <person name="Fraser C.M."/>
            <person name="Venter J.C."/>
        </authorList>
    </citation>
    <scope>NUCLEOTIDE SEQUENCE [LARGE SCALE GENOMIC DNA]</scope>
    <source>
        <strain>cv. Columbia</strain>
    </source>
</reference>
<reference key="2">
    <citation type="journal article" date="2017" name="Plant J.">
        <title>Araport11: a complete reannotation of the Arabidopsis thaliana reference genome.</title>
        <authorList>
            <person name="Cheng C.Y."/>
            <person name="Krishnakumar V."/>
            <person name="Chan A.P."/>
            <person name="Thibaud-Nissen F."/>
            <person name="Schobel S."/>
            <person name="Town C.D."/>
        </authorList>
    </citation>
    <scope>GENOME REANNOTATION</scope>
    <source>
        <strain>cv. Columbia</strain>
    </source>
</reference>
<reference key="3">
    <citation type="submission" date="2006-06" db="EMBL/GenBank/DDBJ databases">
        <title>Arabidopsis ORF clones.</title>
        <authorList>
            <person name="Shinn P."/>
            <person name="Chen H."/>
            <person name="Kim C.J."/>
            <person name="Quinitio C."/>
            <person name="Ecker J.R."/>
        </authorList>
    </citation>
    <scope>NUCLEOTIDE SEQUENCE [LARGE SCALE MRNA]</scope>
    <source>
        <strain>cv. Columbia</strain>
    </source>
</reference>
<reference key="4">
    <citation type="submission" date="2002-03" db="EMBL/GenBank/DDBJ databases">
        <title>Full-length cDNA from Arabidopsis thaliana.</title>
        <authorList>
            <person name="Brover V.V."/>
            <person name="Troukhan M.E."/>
            <person name="Alexandrov N.A."/>
            <person name="Lu Y.-P."/>
            <person name="Flavell R.B."/>
            <person name="Feldmann K.A."/>
        </authorList>
    </citation>
    <scope>NUCLEOTIDE SEQUENCE [LARGE SCALE MRNA]</scope>
</reference>
<reference key="5">
    <citation type="journal article" date="2002" name="Plant Physiol.">
        <title>Cloning and sequencing of cDNAs for hypothetical genes from chromosome 2 of Arabidopsis.</title>
        <authorList>
            <person name="Xiao Y.-L."/>
            <person name="Malik M."/>
            <person name="Whitelaw C.A."/>
            <person name="Town C.D."/>
        </authorList>
    </citation>
    <scope>NUCLEOTIDE SEQUENCE [LARGE SCALE MRNA] OF 9-404</scope>
    <source>
        <strain>cv. Columbia</strain>
    </source>
</reference>
<reference key="6">
    <citation type="journal article" date="2004" name="J. Plant Physiol.">
        <title>Analysis of an Arabidopsis thaliana protein family, structurally related to cytochromes b561 and potentially involved in catecholamine biochemistry in plants.</title>
        <authorList>
            <person name="Verelst W."/>
            <person name="Asard H."/>
        </authorList>
    </citation>
    <scope>DOMAIN</scope>
    <scope>FUNCTION</scope>
</reference>
<reference key="7">
    <citation type="journal article" date="2005" name="Biochim. Biophys. Acta">
        <title>Cytochrome b561 protein family: expanding roles and versatile transmembrane electron transfer abilities as predicted by a new classification system and protein sequence motif analyses.</title>
        <authorList>
            <person name="Tsubaki M."/>
            <person name="Takeuchi F."/>
            <person name="Nakanishi N."/>
        </authorList>
    </citation>
    <scope>GENE FAMILY</scope>
    <scope>NOMENCLATURE</scope>
</reference>
<reference key="8">
    <citation type="journal article" date="2009" name="Plant Physiol.">
        <title>Auxin-responsive genes AIR12 code for a new family of plasma membrane b-type cytochromes specific to flowering plants.</title>
        <authorList>
            <person name="Preger V."/>
            <person name="Tango N."/>
            <person name="Marchand C."/>
            <person name="Lemaire S.D."/>
            <person name="Carbonera D."/>
            <person name="Di Valentin M."/>
            <person name="Costa A."/>
            <person name="Pupillo P."/>
            <person name="Trost P."/>
        </authorList>
    </citation>
    <scope>DOMAIN</scope>
</reference>
<reference key="9">
    <citation type="journal article" date="2013" name="Antioxid. Redox Signal.">
        <title>Cytochromes b561: ascorbate-mediated trans-membrane electron transport.</title>
        <authorList>
            <person name="Asard H."/>
            <person name="Barbaro R."/>
            <person name="Trost P."/>
            <person name="Berczi A."/>
        </authorList>
    </citation>
    <scope>REVIEW</scope>
</reference>
<keyword id="KW-0249">Electron transport</keyword>
<keyword id="KW-0349">Heme</keyword>
<keyword id="KW-0408">Iron</keyword>
<keyword id="KW-0472">Membrane</keyword>
<keyword id="KW-0479">Metal-binding</keyword>
<keyword id="KW-1185">Reference proteome</keyword>
<keyword id="KW-0732">Signal</keyword>
<keyword id="KW-0812">Transmembrane</keyword>
<keyword id="KW-1133">Transmembrane helix</keyword>
<keyword id="KW-0813">Transport</keyword>
<evidence type="ECO:0000250" key="1">
    <source>
        <dbReference type="UniProtKB" id="Q9SWS1"/>
    </source>
</evidence>
<evidence type="ECO:0000255" key="2"/>
<evidence type="ECO:0000255" key="3">
    <source>
        <dbReference type="PROSITE-ProRule" id="PRU00242"/>
    </source>
</evidence>
<evidence type="ECO:0000255" key="4">
    <source>
        <dbReference type="PROSITE-ProRule" id="PRU00246"/>
    </source>
</evidence>
<evidence type="ECO:0000269" key="5">
    <source>
    </source>
</evidence>
<evidence type="ECO:0000269" key="6">
    <source>
    </source>
</evidence>
<evidence type="ECO:0000305" key="7"/>
<name>B561G_ARATH</name>
<accession>Q9SJ74</accession>
<accession>Q4PL86</accession>
<accession>Q8LFW0</accession>
<proteinExistence type="evidence at transcript level"/>
<gene>
    <name type="ordered locus">At2g04850</name>
    <name type="ORF">F28I8.9</name>
</gene>
<comment type="function">
    <text evidence="5">May act as a catecholamine-responsive trans-membrane electron transporter.</text>
</comment>
<comment type="cofactor">
    <cofactor evidence="1">
        <name>heme b</name>
        <dbReference type="ChEBI" id="CHEBI:60344"/>
    </cofactor>
    <text evidence="1">Binds 2 heme b groups non-covalently.</text>
</comment>
<comment type="subcellular location">
    <subcellularLocation>
        <location evidence="7">Membrane</location>
        <topology evidence="7">Multi-pass membrane protein</topology>
    </subcellularLocation>
</comment>
<comment type="domain">
    <text evidence="5 6">DOMON domain could bind catecholamines and thereby could regulate the cytochrome b561 domain function (PubMed:15022831). DOMON domain could bind one heme b (PubMed:19386804).</text>
</comment>
<comment type="sequence caution" evidence="7">
    <conflict type="erroneous initiation">
        <sequence resource="EMBL-CDS" id="AAY82261"/>
    </conflict>
    <text>Truncated N-terminus.</text>
</comment>
<protein>
    <recommendedName>
        <fullName>Cytochrome b561 and DOMON domain-containing protein At2g04850</fullName>
    </recommendedName>
    <alternativeName>
        <fullName>Protein b561A.tha7</fullName>
    </alternativeName>
</protein>
<dbReference type="EMBL" id="AC006955">
    <property type="protein sequence ID" value="AAD22321.2"/>
    <property type="molecule type" value="Genomic_DNA"/>
</dbReference>
<dbReference type="EMBL" id="CP002685">
    <property type="protein sequence ID" value="AEC05876.1"/>
    <property type="molecule type" value="Genomic_DNA"/>
</dbReference>
<dbReference type="EMBL" id="BT025973">
    <property type="protein sequence ID" value="ABG25062.1"/>
    <property type="molecule type" value="mRNA"/>
</dbReference>
<dbReference type="EMBL" id="AY084618">
    <property type="protein sequence ID" value="AAM61181.1"/>
    <property type="molecule type" value="mRNA"/>
</dbReference>
<dbReference type="EMBL" id="DQ069802">
    <property type="protein sequence ID" value="AAY82261.1"/>
    <property type="status" value="ALT_INIT"/>
    <property type="molecule type" value="mRNA"/>
</dbReference>
<dbReference type="PIR" id="C84462">
    <property type="entry name" value="C84462"/>
</dbReference>
<dbReference type="RefSeq" id="NP_565316.1">
    <property type="nucleotide sequence ID" value="NM_126517.3"/>
</dbReference>
<dbReference type="FunCoup" id="Q9SJ74">
    <property type="interactions" value="15"/>
</dbReference>
<dbReference type="STRING" id="3702.Q9SJ74"/>
<dbReference type="PaxDb" id="3702-AT2G04850.1"/>
<dbReference type="ProteomicsDB" id="241189"/>
<dbReference type="EnsemblPlants" id="AT2G04850.1">
    <property type="protein sequence ID" value="AT2G04850.1"/>
    <property type="gene ID" value="AT2G04850"/>
</dbReference>
<dbReference type="GeneID" id="815031"/>
<dbReference type="Gramene" id="AT2G04850.1">
    <property type="protein sequence ID" value="AT2G04850.1"/>
    <property type="gene ID" value="AT2G04850"/>
</dbReference>
<dbReference type="KEGG" id="ath:AT2G04850"/>
<dbReference type="Araport" id="AT2G04850"/>
<dbReference type="TAIR" id="AT2G04850"/>
<dbReference type="eggNOG" id="KOG4293">
    <property type="taxonomic scope" value="Eukaryota"/>
</dbReference>
<dbReference type="HOGENOM" id="CLU_036675_1_1_1"/>
<dbReference type="InParanoid" id="Q9SJ74"/>
<dbReference type="OMA" id="SIAWTYH"/>
<dbReference type="PhylomeDB" id="Q9SJ74"/>
<dbReference type="PRO" id="PR:Q9SJ74"/>
<dbReference type="Proteomes" id="UP000006548">
    <property type="component" value="Chromosome 2"/>
</dbReference>
<dbReference type="ExpressionAtlas" id="Q9SJ74">
    <property type="expression patterns" value="baseline and differential"/>
</dbReference>
<dbReference type="GO" id="GO:0016020">
    <property type="term" value="C:membrane"/>
    <property type="evidence" value="ECO:0007669"/>
    <property type="project" value="UniProtKB-SubCell"/>
</dbReference>
<dbReference type="GO" id="GO:0046872">
    <property type="term" value="F:metal ion binding"/>
    <property type="evidence" value="ECO:0007669"/>
    <property type="project" value="UniProtKB-KW"/>
</dbReference>
<dbReference type="CDD" id="cd08760">
    <property type="entry name" value="Cyt_b561_FRRS1_like"/>
    <property type="match status" value="1"/>
</dbReference>
<dbReference type="CDD" id="cd09629">
    <property type="entry name" value="DOMON_CIL1_like"/>
    <property type="match status" value="1"/>
</dbReference>
<dbReference type="Gene3D" id="1.20.120.1770">
    <property type="match status" value="1"/>
</dbReference>
<dbReference type="InterPro" id="IPR045265">
    <property type="entry name" value="AIR12_DOMON"/>
</dbReference>
<dbReference type="InterPro" id="IPR006593">
    <property type="entry name" value="Cyt_b561/ferric_Rdtase_TM"/>
</dbReference>
<dbReference type="InterPro" id="IPR005018">
    <property type="entry name" value="DOMON_domain"/>
</dbReference>
<dbReference type="InterPro" id="IPR017214">
    <property type="entry name" value="UCP037471"/>
</dbReference>
<dbReference type="PANTHER" id="PTHR23130">
    <property type="entry name" value="CYTOCHROME B561 AND DOMON DOMAIN-CONTAINING PROTEIN"/>
    <property type="match status" value="1"/>
</dbReference>
<dbReference type="PANTHER" id="PTHR23130:SF60">
    <property type="entry name" value="CYTOCHROME B561 AND DOMON DOMAIN-CONTAINING PROTEIN"/>
    <property type="match status" value="1"/>
</dbReference>
<dbReference type="Pfam" id="PF03188">
    <property type="entry name" value="Cytochrom_B561"/>
    <property type="match status" value="1"/>
</dbReference>
<dbReference type="Pfam" id="PF04526">
    <property type="entry name" value="DUF568"/>
    <property type="match status" value="1"/>
</dbReference>
<dbReference type="PIRSF" id="PIRSF037471">
    <property type="entry name" value="UCP037471"/>
    <property type="match status" value="1"/>
</dbReference>
<dbReference type="SMART" id="SM00665">
    <property type="entry name" value="B561"/>
    <property type="match status" value="1"/>
</dbReference>
<dbReference type="PROSITE" id="PS50939">
    <property type="entry name" value="CYTOCHROME_B561"/>
    <property type="match status" value="1"/>
</dbReference>
<dbReference type="PROSITE" id="PS50836">
    <property type="entry name" value="DOMON"/>
    <property type="match status" value="1"/>
</dbReference>